<protein>
    <recommendedName>
        <fullName evidence="1">Bifunctional purine biosynthesis protein PurH</fullName>
    </recommendedName>
    <domain>
        <recommendedName>
            <fullName evidence="1">Phosphoribosylaminoimidazolecarboxamide formyltransferase</fullName>
            <ecNumber evidence="1">2.1.2.3</ecNumber>
        </recommendedName>
        <alternativeName>
            <fullName evidence="1">AICAR transformylase</fullName>
        </alternativeName>
    </domain>
    <domain>
        <recommendedName>
            <fullName evidence="1">IMP cyclohydrolase</fullName>
            <ecNumber evidence="1">3.5.4.10</ecNumber>
        </recommendedName>
        <alternativeName>
            <fullName evidence="1">ATIC</fullName>
        </alternativeName>
        <alternativeName>
            <fullName evidence="1">IMP synthase</fullName>
        </alternativeName>
        <alternativeName>
            <fullName evidence="1">Inosinicase</fullName>
        </alternativeName>
    </domain>
</protein>
<feature type="chain" id="PRO_1000192974" description="Bifunctional purine biosynthesis protein PurH">
    <location>
        <begin position="1"/>
        <end position="529"/>
    </location>
</feature>
<feature type="domain" description="MGS-like" evidence="2">
    <location>
        <begin position="1"/>
        <end position="148"/>
    </location>
</feature>
<feature type="modified residue" description="N6-acetyllysine" evidence="1">
    <location>
        <position position="287"/>
    </location>
</feature>
<reference key="1">
    <citation type="journal article" date="2008" name="J. Bacteriol.">
        <title>Insights into the environmental resistance gene pool from the genome sequence of the multidrug-resistant environmental isolate Escherichia coli SMS-3-5.</title>
        <authorList>
            <person name="Fricke W.F."/>
            <person name="Wright M.S."/>
            <person name="Lindell A.H."/>
            <person name="Harkins D.M."/>
            <person name="Baker-Austin C."/>
            <person name="Ravel J."/>
            <person name="Stepanauskas R."/>
        </authorList>
    </citation>
    <scope>NUCLEOTIDE SEQUENCE [LARGE SCALE GENOMIC DNA]</scope>
    <source>
        <strain>SMS-3-5 / SECEC</strain>
    </source>
</reference>
<evidence type="ECO:0000255" key="1">
    <source>
        <dbReference type="HAMAP-Rule" id="MF_00139"/>
    </source>
</evidence>
<evidence type="ECO:0000255" key="2">
    <source>
        <dbReference type="PROSITE-ProRule" id="PRU01202"/>
    </source>
</evidence>
<dbReference type="EC" id="2.1.2.3" evidence="1"/>
<dbReference type="EC" id="3.5.4.10" evidence="1"/>
<dbReference type="EMBL" id="CP000970">
    <property type="protein sequence ID" value="ACB16523.1"/>
    <property type="molecule type" value="Genomic_DNA"/>
</dbReference>
<dbReference type="RefSeq" id="WP_001187583.1">
    <property type="nucleotide sequence ID" value="NC_010498.1"/>
</dbReference>
<dbReference type="SMR" id="B1LPG6"/>
<dbReference type="KEGG" id="ecm:EcSMS35_4455"/>
<dbReference type="HOGENOM" id="CLU_016316_5_2_6"/>
<dbReference type="UniPathway" id="UPA00074">
    <property type="reaction ID" value="UER00133"/>
</dbReference>
<dbReference type="UniPathway" id="UPA00074">
    <property type="reaction ID" value="UER00135"/>
</dbReference>
<dbReference type="Proteomes" id="UP000007011">
    <property type="component" value="Chromosome"/>
</dbReference>
<dbReference type="GO" id="GO:0005829">
    <property type="term" value="C:cytosol"/>
    <property type="evidence" value="ECO:0007669"/>
    <property type="project" value="TreeGrafter"/>
</dbReference>
<dbReference type="GO" id="GO:0003937">
    <property type="term" value="F:IMP cyclohydrolase activity"/>
    <property type="evidence" value="ECO:0007669"/>
    <property type="project" value="UniProtKB-UniRule"/>
</dbReference>
<dbReference type="GO" id="GO:0004643">
    <property type="term" value="F:phosphoribosylaminoimidazolecarboxamide formyltransferase activity"/>
    <property type="evidence" value="ECO:0007669"/>
    <property type="project" value="UniProtKB-UniRule"/>
</dbReference>
<dbReference type="GO" id="GO:0006189">
    <property type="term" value="P:'de novo' IMP biosynthetic process"/>
    <property type="evidence" value="ECO:0007669"/>
    <property type="project" value="UniProtKB-UniRule"/>
</dbReference>
<dbReference type="CDD" id="cd01421">
    <property type="entry name" value="IMPCH"/>
    <property type="match status" value="1"/>
</dbReference>
<dbReference type="FunFam" id="3.40.140.20:FF:000001">
    <property type="entry name" value="Bifunctional purine biosynthesis protein PurH"/>
    <property type="match status" value="1"/>
</dbReference>
<dbReference type="FunFam" id="3.40.140.20:FF:000002">
    <property type="entry name" value="Bifunctional purine biosynthesis protein PurH"/>
    <property type="match status" value="1"/>
</dbReference>
<dbReference type="FunFam" id="3.40.50.1380:FF:000001">
    <property type="entry name" value="Bifunctional purine biosynthesis protein PurH"/>
    <property type="match status" value="1"/>
</dbReference>
<dbReference type="Gene3D" id="3.40.140.20">
    <property type="match status" value="2"/>
</dbReference>
<dbReference type="Gene3D" id="3.40.50.1380">
    <property type="entry name" value="Methylglyoxal synthase-like domain"/>
    <property type="match status" value="1"/>
</dbReference>
<dbReference type="HAMAP" id="MF_00139">
    <property type="entry name" value="PurH"/>
    <property type="match status" value="1"/>
</dbReference>
<dbReference type="InterPro" id="IPR024051">
    <property type="entry name" value="AICAR_Tfase_dup_dom_sf"/>
</dbReference>
<dbReference type="InterPro" id="IPR016193">
    <property type="entry name" value="Cytidine_deaminase-like"/>
</dbReference>
<dbReference type="InterPro" id="IPR011607">
    <property type="entry name" value="MGS-like_dom"/>
</dbReference>
<dbReference type="InterPro" id="IPR036914">
    <property type="entry name" value="MGS-like_dom_sf"/>
</dbReference>
<dbReference type="InterPro" id="IPR002695">
    <property type="entry name" value="PurH-like"/>
</dbReference>
<dbReference type="NCBIfam" id="NF002049">
    <property type="entry name" value="PRK00881.1"/>
    <property type="match status" value="1"/>
</dbReference>
<dbReference type="NCBIfam" id="TIGR00355">
    <property type="entry name" value="purH"/>
    <property type="match status" value="1"/>
</dbReference>
<dbReference type="PANTHER" id="PTHR11692:SF0">
    <property type="entry name" value="BIFUNCTIONAL PURINE BIOSYNTHESIS PROTEIN ATIC"/>
    <property type="match status" value="1"/>
</dbReference>
<dbReference type="PANTHER" id="PTHR11692">
    <property type="entry name" value="BIFUNCTIONAL PURINE BIOSYNTHESIS PROTEIN PURH"/>
    <property type="match status" value="1"/>
</dbReference>
<dbReference type="Pfam" id="PF01808">
    <property type="entry name" value="AICARFT_IMPCHas"/>
    <property type="match status" value="1"/>
</dbReference>
<dbReference type="Pfam" id="PF02142">
    <property type="entry name" value="MGS"/>
    <property type="match status" value="1"/>
</dbReference>
<dbReference type="PIRSF" id="PIRSF000414">
    <property type="entry name" value="AICARFT_IMPCHas"/>
    <property type="match status" value="1"/>
</dbReference>
<dbReference type="SMART" id="SM00798">
    <property type="entry name" value="AICARFT_IMPCHas"/>
    <property type="match status" value="1"/>
</dbReference>
<dbReference type="SMART" id="SM00851">
    <property type="entry name" value="MGS"/>
    <property type="match status" value="1"/>
</dbReference>
<dbReference type="SUPFAM" id="SSF53927">
    <property type="entry name" value="Cytidine deaminase-like"/>
    <property type="match status" value="1"/>
</dbReference>
<dbReference type="SUPFAM" id="SSF52335">
    <property type="entry name" value="Methylglyoxal synthase-like"/>
    <property type="match status" value="1"/>
</dbReference>
<dbReference type="PROSITE" id="PS51855">
    <property type="entry name" value="MGS"/>
    <property type="match status" value="1"/>
</dbReference>
<accession>B1LPG6</accession>
<comment type="catalytic activity">
    <reaction evidence="1">
        <text>(6R)-10-formyltetrahydrofolate + 5-amino-1-(5-phospho-beta-D-ribosyl)imidazole-4-carboxamide = 5-formamido-1-(5-phospho-D-ribosyl)imidazole-4-carboxamide + (6S)-5,6,7,8-tetrahydrofolate</text>
        <dbReference type="Rhea" id="RHEA:22192"/>
        <dbReference type="ChEBI" id="CHEBI:57453"/>
        <dbReference type="ChEBI" id="CHEBI:58467"/>
        <dbReference type="ChEBI" id="CHEBI:58475"/>
        <dbReference type="ChEBI" id="CHEBI:195366"/>
        <dbReference type="EC" id="2.1.2.3"/>
    </reaction>
</comment>
<comment type="catalytic activity">
    <reaction evidence="1">
        <text>IMP + H2O = 5-formamido-1-(5-phospho-D-ribosyl)imidazole-4-carboxamide</text>
        <dbReference type="Rhea" id="RHEA:18445"/>
        <dbReference type="ChEBI" id="CHEBI:15377"/>
        <dbReference type="ChEBI" id="CHEBI:58053"/>
        <dbReference type="ChEBI" id="CHEBI:58467"/>
        <dbReference type="EC" id="3.5.4.10"/>
    </reaction>
</comment>
<comment type="pathway">
    <text evidence="1">Purine metabolism; IMP biosynthesis via de novo pathway; 5-formamido-1-(5-phospho-D-ribosyl)imidazole-4-carboxamide from 5-amino-1-(5-phospho-D-ribosyl)imidazole-4-carboxamide (10-formyl THF route): step 1/1.</text>
</comment>
<comment type="pathway">
    <text evidence="1">Purine metabolism; IMP biosynthesis via de novo pathway; IMP from 5-formamido-1-(5-phospho-D-ribosyl)imidazole-4-carboxamide: step 1/1.</text>
</comment>
<comment type="domain">
    <text evidence="1">The IMP cyclohydrolase activity resides in the N-terminal region.</text>
</comment>
<comment type="similarity">
    <text evidence="1">Belongs to the PurH family.</text>
</comment>
<name>PUR9_ECOSM</name>
<sequence length="529" mass="57370">MQQRRPVRRALLSVSDKAGIVEFAQALSARGVELLSTGGTARLLAEKGLPVTEVSDYTGFPEMMDGRVKTLHPKVHGGILGRRGQDDTIMEEHQIQPIDMVVVNLYPFAQTVAREGCSLEDAVENIDIGGPTMVRSAAKNHKDVAIVVKSSDYDAIIKEIDANEGSLTLETRFDLAIKAFEHTAAYDSMIANYFGSMVPAYHGESKEAAGRFPRTLNLNFIKKQDMRYGENSHQQAAFYIEENVKEASVATATQVQGKALSYNNIADTDAALECVKEFAEPACVIVKHANPCGVAIGNSILDAYDRAYKTDPTSAFGGIIAFNRELDAETAQAIISRQFVEVIIAPSASEEALKITAAKQNVRVLTCGQWGERVPGLDFKRVNGGLLVQDRDLGMVGAEELRVVTKRQPSEQELRDALFCWKVAKFVKSNAIVYAKNNMTIGIGAGQMSRVYSAKIAGIKAADEGLEVKGSSMASDAFFPFRDGIDAAAAAGVTCVIQPGGSIRDDEVIAAADEHGIAMLFTDMRHFRH</sequence>
<keyword id="KW-0007">Acetylation</keyword>
<keyword id="KW-0378">Hydrolase</keyword>
<keyword id="KW-0511">Multifunctional enzyme</keyword>
<keyword id="KW-0658">Purine biosynthesis</keyword>
<keyword id="KW-0808">Transferase</keyword>
<gene>
    <name evidence="1" type="primary">purH</name>
    <name type="ordered locus">EcSMS35_4455</name>
</gene>
<proteinExistence type="inferred from homology"/>
<organism>
    <name type="scientific">Escherichia coli (strain SMS-3-5 / SECEC)</name>
    <dbReference type="NCBI Taxonomy" id="439855"/>
    <lineage>
        <taxon>Bacteria</taxon>
        <taxon>Pseudomonadati</taxon>
        <taxon>Pseudomonadota</taxon>
        <taxon>Gammaproteobacteria</taxon>
        <taxon>Enterobacterales</taxon>
        <taxon>Enterobacteriaceae</taxon>
        <taxon>Escherichia</taxon>
    </lineage>
</organism>